<dbReference type="EC" id="2.7.4.3"/>
<dbReference type="EC" id="2.7.4.6"/>
<dbReference type="EMBL" id="BC062516">
    <property type="protein sequence ID" value="AAH62516.1"/>
    <property type="molecule type" value="mRNA"/>
</dbReference>
<dbReference type="RefSeq" id="NP_989104.1">
    <property type="nucleotide sequence ID" value="NM_203773.1"/>
</dbReference>
<dbReference type="SMR" id="Q6P618"/>
<dbReference type="FunCoup" id="Q6P618">
    <property type="interactions" value="297"/>
</dbReference>
<dbReference type="STRING" id="8364.ENSXETP00000008144"/>
<dbReference type="PaxDb" id="8364-ENSXETP00000013725"/>
<dbReference type="DNASU" id="394708"/>
<dbReference type="GeneID" id="394708"/>
<dbReference type="KEGG" id="xtr:394708"/>
<dbReference type="AGR" id="Xenbase:XB-GENE-5831327"/>
<dbReference type="CTD" id="158067"/>
<dbReference type="Xenbase" id="XB-GENE-5831327">
    <property type="gene designation" value="ak8"/>
</dbReference>
<dbReference type="eggNOG" id="KOG3078">
    <property type="taxonomic scope" value="Eukaryota"/>
</dbReference>
<dbReference type="InParanoid" id="Q6P618"/>
<dbReference type="OMA" id="DCIRRGW"/>
<dbReference type="OrthoDB" id="522106at2759"/>
<dbReference type="Reactome" id="R-XTR-499943">
    <property type="pathway name" value="Interconversion of nucleotide di- and triphosphates"/>
</dbReference>
<dbReference type="Proteomes" id="UP000008143">
    <property type="component" value="Chromosome 8"/>
</dbReference>
<dbReference type="Bgee" id="ENSXETG00000006260">
    <property type="expression patterns" value="Expressed in testis and 9 other cell types or tissues"/>
</dbReference>
<dbReference type="GO" id="GO:0005829">
    <property type="term" value="C:cytosol"/>
    <property type="evidence" value="ECO:0007669"/>
    <property type="project" value="UniProtKB-SubCell"/>
</dbReference>
<dbReference type="GO" id="GO:0004127">
    <property type="term" value="F:(d)CMP kinase activity"/>
    <property type="evidence" value="ECO:0000250"/>
    <property type="project" value="UniProtKB"/>
</dbReference>
<dbReference type="GO" id="GO:0004017">
    <property type="term" value="F:adenylate kinase activity"/>
    <property type="evidence" value="ECO:0000250"/>
    <property type="project" value="UniProtKB"/>
</dbReference>
<dbReference type="GO" id="GO:0005524">
    <property type="term" value="F:ATP binding"/>
    <property type="evidence" value="ECO:0007669"/>
    <property type="project" value="UniProtKB-KW"/>
</dbReference>
<dbReference type="GO" id="GO:0004550">
    <property type="term" value="F:nucleoside diphosphate kinase activity"/>
    <property type="evidence" value="ECO:0000250"/>
    <property type="project" value="UniProtKB"/>
</dbReference>
<dbReference type="CDD" id="cd01428">
    <property type="entry name" value="ADK"/>
    <property type="match status" value="2"/>
</dbReference>
<dbReference type="CDD" id="cd22979">
    <property type="entry name" value="DD_AK8"/>
    <property type="match status" value="1"/>
</dbReference>
<dbReference type="FunFam" id="3.40.50.300:FF:001538">
    <property type="entry name" value="Adenylate kinase 8"/>
    <property type="match status" value="1"/>
</dbReference>
<dbReference type="FunFam" id="3.40.50.300:FF:001617">
    <property type="entry name" value="Adenylate kinase 8"/>
    <property type="match status" value="1"/>
</dbReference>
<dbReference type="Gene3D" id="3.40.50.300">
    <property type="entry name" value="P-loop containing nucleotide triphosphate hydrolases"/>
    <property type="match status" value="2"/>
</dbReference>
<dbReference type="HAMAP" id="MF_00235">
    <property type="entry name" value="Adenylate_kinase_Adk"/>
    <property type="match status" value="2"/>
</dbReference>
<dbReference type="InterPro" id="IPR000850">
    <property type="entry name" value="Adenylat/UMP-CMP_kin"/>
</dbReference>
<dbReference type="InterPro" id="IPR027417">
    <property type="entry name" value="P-loop_NTPase"/>
</dbReference>
<dbReference type="PANTHER" id="PTHR23359">
    <property type="entry name" value="NUCLEOTIDE KINASE"/>
    <property type="match status" value="1"/>
</dbReference>
<dbReference type="Pfam" id="PF00406">
    <property type="entry name" value="ADK"/>
    <property type="match status" value="2"/>
</dbReference>
<dbReference type="PRINTS" id="PR00094">
    <property type="entry name" value="ADENYLTKNASE"/>
</dbReference>
<dbReference type="SUPFAM" id="SSF52540">
    <property type="entry name" value="P-loop containing nucleoside triphosphate hydrolases"/>
    <property type="match status" value="2"/>
</dbReference>
<keyword id="KW-0067">ATP-binding</keyword>
<keyword id="KW-0963">Cytoplasm</keyword>
<keyword id="KW-0418">Kinase</keyword>
<keyword id="KW-0547">Nucleotide-binding</keyword>
<keyword id="KW-1185">Reference proteome</keyword>
<keyword id="KW-0808">Transferase</keyword>
<proteinExistence type="evidence at transcript level"/>
<name>KAD8_XENTR</name>
<organism>
    <name type="scientific">Xenopus tropicalis</name>
    <name type="common">Western clawed frog</name>
    <name type="synonym">Silurana tropicalis</name>
    <dbReference type="NCBI Taxonomy" id="8364"/>
    <lineage>
        <taxon>Eukaryota</taxon>
        <taxon>Metazoa</taxon>
        <taxon>Chordata</taxon>
        <taxon>Craniata</taxon>
        <taxon>Vertebrata</taxon>
        <taxon>Euteleostomi</taxon>
        <taxon>Amphibia</taxon>
        <taxon>Batrachia</taxon>
        <taxon>Anura</taxon>
        <taxon>Pipoidea</taxon>
        <taxon>Pipidae</taxon>
        <taxon>Xenopodinae</taxon>
        <taxon>Xenopus</taxon>
        <taxon>Silurana</taxon>
    </lineage>
</organism>
<sequence length="485" mass="54787">MDATRKPLRIPPAMALYAEEQGVFDIIQKMVKKVLVDRPKDPIQYMIDHLSNDNDDVPRVFILGPPASGKHTMAKLLCKRLNATHLTPESVLSSDVSLLAKEAQSYRDKGQEVPDELWAKLMQQRLSKVDCIKRGWILEGFPKTREQALKLQMAGICPDHLVVLDAPDIVLIERNMGKRIDTANGEVYHTTFDWPSDPTVQRNLVEPEGISEEETGLRLIEYHRNIPGILRTYPKTSKKINADQPYMDVFSQVLTFVLSKPRSLAPHTPRILLYGPPGSGRSLQASLLAQKYGIVNICCGQVLKEAVADQTKLGEVIQPYIENDQQVPDNLVLKILTEHLSSLESATHGWVLHGFPRDTDQAALLKDAGFVPNRVFSLDLSDDVVIERLSLCMTDPVSGERYHDIYKPAPSSEVHERLQQNPRHSEQRVQARLDMYHANAEELDEFYPDVIHINADQDPYTVFEFIESYTVSPLPRPLPEEPTSP</sequence>
<protein>
    <recommendedName>
        <fullName>Adenylate kinase 8</fullName>
        <shortName>AK 8</shortName>
        <ecNumber>2.7.4.3</ecNumber>
        <ecNumber>2.7.4.6</ecNumber>
    </recommendedName>
    <alternativeName>
        <fullName>ATP-AMP transphosphorylase 8</fullName>
    </alternativeName>
</protein>
<evidence type="ECO:0000250" key="1">
    <source>
        <dbReference type="UniProtKB" id="P69441"/>
    </source>
</evidence>
<evidence type="ECO:0000250" key="2">
    <source>
        <dbReference type="UniProtKB" id="Q96MA6"/>
    </source>
</evidence>
<evidence type="ECO:0000305" key="3"/>
<accession>Q6P618</accession>
<comment type="function">
    <text evidence="2">Nucleoside monophosphate (NMP) kinase that catalyzes the reversible transfer of the terminal phosphate group between nucleoside triphosphates and monophosphates. Has highest activity toward AMP, and weaker activity toward dAMP, CMP and dCMP. Also displays broad nucleoside diphosphate kinase activity.</text>
</comment>
<comment type="catalytic activity">
    <reaction evidence="2">
        <text>AMP + ATP = 2 ADP</text>
        <dbReference type="Rhea" id="RHEA:12973"/>
        <dbReference type="ChEBI" id="CHEBI:30616"/>
        <dbReference type="ChEBI" id="CHEBI:456215"/>
        <dbReference type="ChEBI" id="CHEBI:456216"/>
        <dbReference type="EC" id="2.7.4.3"/>
    </reaction>
</comment>
<comment type="catalytic activity">
    <reaction evidence="2">
        <text>a 2'-deoxyribonucleoside 5'-diphosphate + ATP = a 2'-deoxyribonucleoside 5'-triphosphate + ADP</text>
        <dbReference type="Rhea" id="RHEA:44640"/>
        <dbReference type="ChEBI" id="CHEBI:30616"/>
        <dbReference type="ChEBI" id="CHEBI:61560"/>
        <dbReference type="ChEBI" id="CHEBI:73316"/>
        <dbReference type="ChEBI" id="CHEBI:456216"/>
        <dbReference type="EC" id="2.7.4.6"/>
    </reaction>
</comment>
<comment type="catalytic activity">
    <reaction evidence="2">
        <text>a ribonucleoside 5'-diphosphate + ATP = a ribonucleoside 5'-triphosphate + ADP</text>
        <dbReference type="Rhea" id="RHEA:18113"/>
        <dbReference type="ChEBI" id="CHEBI:30616"/>
        <dbReference type="ChEBI" id="CHEBI:57930"/>
        <dbReference type="ChEBI" id="CHEBI:61557"/>
        <dbReference type="ChEBI" id="CHEBI:456216"/>
        <dbReference type="EC" id="2.7.4.6"/>
    </reaction>
</comment>
<comment type="subcellular location">
    <subcellularLocation>
        <location evidence="2">Cytoplasm</location>
        <location evidence="2">Cytosol</location>
    </subcellularLocation>
</comment>
<comment type="similarity">
    <text evidence="3">Belongs to the adenylate kinase family.</text>
</comment>
<reference key="1">
    <citation type="submission" date="2003-11" db="EMBL/GenBank/DDBJ databases">
        <authorList>
            <consortium name="NIH - Xenopus Gene Collection (XGC) project"/>
        </authorList>
    </citation>
    <scope>NUCLEOTIDE SEQUENCE [LARGE SCALE MRNA]</scope>
    <source>
        <tissue>Embryo</tissue>
    </source>
</reference>
<feature type="chain" id="PRO_0000279389" description="Adenylate kinase 8">
    <location>
        <begin position="1"/>
        <end position="485"/>
    </location>
</feature>
<feature type="region of interest" description="Adenylate kinase 1" evidence="2">
    <location>
        <begin position="58"/>
        <end position="258"/>
    </location>
</feature>
<feature type="region of interest" description="NMP 1" evidence="1">
    <location>
        <begin position="87"/>
        <end position="113"/>
    </location>
</feature>
<feature type="region of interest" description="LID 1" evidence="1">
    <location>
        <begin position="177"/>
        <end position="206"/>
    </location>
</feature>
<feature type="region of interest" description="Adenylate kinase 2" evidence="2">
    <location>
        <begin position="269"/>
        <end position="472"/>
    </location>
</feature>
<feature type="region of interest" description="NMP 2" evidence="1">
    <location>
        <begin position="298"/>
        <end position="327"/>
    </location>
</feature>
<feature type="region of interest" description="LID 2" evidence="1">
    <location>
        <begin position="391"/>
        <end position="424"/>
    </location>
</feature>
<feature type="binding site" evidence="1">
    <location>
        <begin position="67"/>
        <end position="72"/>
    </location>
    <ligand>
        <name>ATP</name>
        <dbReference type="ChEBI" id="CHEBI:30616"/>
        <label>1</label>
    </ligand>
</feature>
<feature type="binding site" evidence="1">
    <location>
        <begin position="140"/>
        <end position="143"/>
    </location>
    <ligand>
        <name>AMP</name>
        <dbReference type="ChEBI" id="CHEBI:456215"/>
        <label>1</label>
    </ligand>
</feature>
<feature type="binding site" evidence="1">
    <location>
        <position position="147"/>
    </location>
    <ligand>
        <name>AMP</name>
        <dbReference type="ChEBI" id="CHEBI:456215"/>
        <label>1</label>
    </ligand>
</feature>
<feature type="binding site" evidence="1">
    <location>
        <position position="218"/>
    </location>
    <ligand>
        <name>AMP</name>
        <dbReference type="ChEBI" id="CHEBI:456215"/>
        <label>1</label>
    </ligand>
</feature>
<feature type="binding site" evidence="1">
    <location>
        <begin position="278"/>
        <end position="283"/>
    </location>
    <ligand>
        <name>ATP</name>
        <dbReference type="ChEBI" id="CHEBI:30616"/>
        <label>2</label>
    </ligand>
</feature>
<feature type="binding site" evidence="1">
    <location>
        <begin position="325"/>
        <end position="327"/>
    </location>
    <ligand>
        <name>AMP</name>
        <dbReference type="ChEBI" id="CHEBI:456215"/>
        <label>2</label>
    </ligand>
</feature>
<feature type="binding site" evidence="1">
    <location>
        <begin position="354"/>
        <end position="357"/>
    </location>
    <ligand>
        <name>AMP</name>
        <dbReference type="ChEBI" id="CHEBI:456215"/>
        <label>2</label>
    </ligand>
</feature>
<feature type="binding site" evidence="1">
    <location>
        <position position="361"/>
    </location>
    <ligand>
        <name>AMP</name>
        <dbReference type="ChEBI" id="CHEBI:456215"/>
        <label>2</label>
    </ligand>
</feature>
<feature type="binding site" evidence="1">
    <location>
        <position position="432"/>
    </location>
    <ligand>
        <name>AMP</name>
        <dbReference type="ChEBI" id="CHEBI:456215"/>
        <label>2</label>
    </ligand>
</feature>
<gene>
    <name type="primary">ak8</name>
</gene>